<evidence type="ECO:0000255" key="1">
    <source>
        <dbReference type="HAMAP-Rule" id="MF_01346"/>
    </source>
</evidence>
<protein>
    <recommendedName>
        <fullName evidence="1">ATP synthase subunit alpha</fullName>
        <ecNumber evidence="1">7.1.2.2</ecNumber>
    </recommendedName>
    <alternativeName>
        <fullName evidence="1">ATP synthase F1 sector subunit alpha</fullName>
    </alternativeName>
    <alternativeName>
        <fullName evidence="1">F-ATPase subunit alpha</fullName>
    </alternativeName>
</protein>
<name>ATPA_BART1</name>
<organism>
    <name type="scientific">Bartonella tribocorum (strain CIP 105476 / IBS 506)</name>
    <dbReference type="NCBI Taxonomy" id="382640"/>
    <lineage>
        <taxon>Bacteria</taxon>
        <taxon>Pseudomonadati</taxon>
        <taxon>Pseudomonadota</taxon>
        <taxon>Alphaproteobacteria</taxon>
        <taxon>Hyphomicrobiales</taxon>
        <taxon>Bartonellaceae</taxon>
        <taxon>Bartonella</taxon>
    </lineage>
</organism>
<dbReference type="EC" id="7.1.2.2" evidence="1"/>
<dbReference type="EMBL" id="AM260525">
    <property type="protein sequence ID" value="CAK02444.1"/>
    <property type="molecule type" value="Genomic_DNA"/>
</dbReference>
<dbReference type="RefSeq" id="WP_012232485.1">
    <property type="nucleotide sequence ID" value="NC_010161.1"/>
</dbReference>
<dbReference type="SMR" id="A9IYX0"/>
<dbReference type="KEGG" id="btr:BT_2466"/>
<dbReference type="eggNOG" id="COG0056">
    <property type="taxonomic scope" value="Bacteria"/>
</dbReference>
<dbReference type="HOGENOM" id="CLU_010091_2_1_5"/>
<dbReference type="Proteomes" id="UP000001592">
    <property type="component" value="Chromosome"/>
</dbReference>
<dbReference type="GO" id="GO:0005886">
    <property type="term" value="C:plasma membrane"/>
    <property type="evidence" value="ECO:0007669"/>
    <property type="project" value="UniProtKB-SubCell"/>
</dbReference>
<dbReference type="GO" id="GO:0045259">
    <property type="term" value="C:proton-transporting ATP synthase complex"/>
    <property type="evidence" value="ECO:0007669"/>
    <property type="project" value="UniProtKB-KW"/>
</dbReference>
<dbReference type="GO" id="GO:0043531">
    <property type="term" value="F:ADP binding"/>
    <property type="evidence" value="ECO:0007669"/>
    <property type="project" value="TreeGrafter"/>
</dbReference>
<dbReference type="GO" id="GO:0005524">
    <property type="term" value="F:ATP binding"/>
    <property type="evidence" value="ECO:0007669"/>
    <property type="project" value="UniProtKB-UniRule"/>
</dbReference>
<dbReference type="GO" id="GO:0046933">
    <property type="term" value="F:proton-transporting ATP synthase activity, rotational mechanism"/>
    <property type="evidence" value="ECO:0007669"/>
    <property type="project" value="UniProtKB-UniRule"/>
</dbReference>
<dbReference type="CDD" id="cd18113">
    <property type="entry name" value="ATP-synt_F1_alpha_C"/>
    <property type="match status" value="1"/>
</dbReference>
<dbReference type="CDD" id="cd18116">
    <property type="entry name" value="ATP-synt_F1_alpha_N"/>
    <property type="match status" value="1"/>
</dbReference>
<dbReference type="CDD" id="cd01132">
    <property type="entry name" value="F1-ATPase_alpha_CD"/>
    <property type="match status" value="1"/>
</dbReference>
<dbReference type="FunFam" id="1.20.150.20:FF:000001">
    <property type="entry name" value="ATP synthase subunit alpha"/>
    <property type="match status" value="1"/>
</dbReference>
<dbReference type="FunFam" id="2.40.30.20:FF:000001">
    <property type="entry name" value="ATP synthase subunit alpha"/>
    <property type="match status" value="1"/>
</dbReference>
<dbReference type="FunFam" id="3.40.50.300:FF:002432">
    <property type="entry name" value="ATP synthase subunit alpha, mitochondrial"/>
    <property type="match status" value="1"/>
</dbReference>
<dbReference type="Gene3D" id="2.40.30.20">
    <property type="match status" value="1"/>
</dbReference>
<dbReference type="Gene3D" id="1.20.150.20">
    <property type="entry name" value="ATP synthase alpha/beta chain, C-terminal domain"/>
    <property type="match status" value="1"/>
</dbReference>
<dbReference type="Gene3D" id="3.40.50.300">
    <property type="entry name" value="P-loop containing nucleotide triphosphate hydrolases"/>
    <property type="match status" value="1"/>
</dbReference>
<dbReference type="HAMAP" id="MF_01346">
    <property type="entry name" value="ATP_synth_alpha_bact"/>
    <property type="match status" value="1"/>
</dbReference>
<dbReference type="InterPro" id="IPR023366">
    <property type="entry name" value="ATP_synth_asu-like_sf"/>
</dbReference>
<dbReference type="InterPro" id="IPR000793">
    <property type="entry name" value="ATP_synth_asu_C"/>
</dbReference>
<dbReference type="InterPro" id="IPR038376">
    <property type="entry name" value="ATP_synth_asu_C_sf"/>
</dbReference>
<dbReference type="InterPro" id="IPR033732">
    <property type="entry name" value="ATP_synth_F1_a_nt-bd_dom"/>
</dbReference>
<dbReference type="InterPro" id="IPR005294">
    <property type="entry name" value="ATP_synth_F1_asu"/>
</dbReference>
<dbReference type="InterPro" id="IPR020003">
    <property type="entry name" value="ATPase_a/bsu_AS"/>
</dbReference>
<dbReference type="InterPro" id="IPR004100">
    <property type="entry name" value="ATPase_F1/V1/A1_a/bsu_N"/>
</dbReference>
<dbReference type="InterPro" id="IPR036121">
    <property type="entry name" value="ATPase_F1/V1/A1_a/bsu_N_sf"/>
</dbReference>
<dbReference type="InterPro" id="IPR000194">
    <property type="entry name" value="ATPase_F1/V1/A1_a/bsu_nucl-bd"/>
</dbReference>
<dbReference type="InterPro" id="IPR027417">
    <property type="entry name" value="P-loop_NTPase"/>
</dbReference>
<dbReference type="NCBIfam" id="TIGR00962">
    <property type="entry name" value="atpA"/>
    <property type="match status" value="1"/>
</dbReference>
<dbReference type="NCBIfam" id="NF009884">
    <property type="entry name" value="PRK13343.1"/>
    <property type="match status" value="1"/>
</dbReference>
<dbReference type="PANTHER" id="PTHR48082">
    <property type="entry name" value="ATP SYNTHASE SUBUNIT ALPHA, MITOCHONDRIAL"/>
    <property type="match status" value="1"/>
</dbReference>
<dbReference type="PANTHER" id="PTHR48082:SF2">
    <property type="entry name" value="ATP SYNTHASE SUBUNIT ALPHA, MITOCHONDRIAL"/>
    <property type="match status" value="1"/>
</dbReference>
<dbReference type="Pfam" id="PF00006">
    <property type="entry name" value="ATP-synt_ab"/>
    <property type="match status" value="1"/>
</dbReference>
<dbReference type="Pfam" id="PF00306">
    <property type="entry name" value="ATP-synt_ab_C"/>
    <property type="match status" value="1"/>
</dbReference>
<dbReference type="Pfam" id="PF02874">
    <property type="entry name" value="ATP-synt_ab_N"/>
    <property type="match status" value="1"/>
</dbReference>
<dbReference type="PIRSF" id="PIRSF039088">
    <property type="entry name" value="F_ATPase_subunit_alpha"/>
    <property type="match status" value="1"/>
</dbReference>
<dbReference type="SUPFAM" id="SSF47917">
    <property type="entry name" value="C-terminal domain of alpha and beta subunits of F1 ATP synthase"/>
    <property type="match status" value="1"/>
</dbReference>
<dbReference type="SUPFAM" id="SSF50615">
    <property type="entry name" value="N-terminal domain of alpha and beta subunits of F1 ATP synthase"/>
    <property type="match status" value="1"/>
</dbReference>
<dbReference type="SUPFAM" id="SSF52540">
    <property type="entry name" value="P-loop containing nucleoside triphosphate hydrolases"/>
    <property type="match status" value="1"/>
</dbReference>
<dbReference type="PROSITE" id="PS00152">
    <property type="entry name" value="ATPASE_ALPHA_BETA"/>
    <property type="match status" value="1"/>
</dbReference>
<comment type="function">
    <text evidence="1">Produces ATP from ADP in the presence of a proton gradient across the membrane. The alpha chain is a regulatory subunit.</text>
</comment>
<comment type="catalytic activity">
    <reaction evidence="1">
        <text>ATP + H2O + 4 H(+)(in) = ADP + phosphate + 5 H(+)(out)</text>
        <dbReference type="Rhea" id="RHEA:57720"/>
        <dbReference type="ChEBI" id="CHEBI:15377"/>
        <dbReference type="ChEBI" id="CHEBI:15378"/>
        <dbReference type="ChEBI" id="CHEBI:30616"/>
        <dbReference type="ChEBI" id="CHEBI:43474"/>
        <dbReference type="ChEBI" id="CHEBI:456216"/>
        <dbReference type="EC" id="7.1.2.2"/>
    </reaction>
</comment>
<comment type="subunit">
    <text evidence="1">F-type ATPases have 2 components, CF(1) - the catalytic core - and CF(0) - the membrane proton channel. CF(1) has five subunits: alpha(3), beta(3), gamma(1), delta(1), epsilon(1). CF(0) has three main subunits: a(1), b(2) and c(9-12). The alpha and beta chains form an alternating ring which encloses part of the gamma chain. CF(1) is attached to CF(0) by a central stalk formed by the gamma and epsilon chains, while a peripheral stalk is formed by the delta and b chains.</text>
</comment>
<comment type="subcellular location">
    <subcellularLocation>
        <location evidence="1">Cell inner membrane</location>
        <topology evidence="1">Peripheral membrane protein</topology>
    </subcellularLocation>
</comment>
<comment type="similarity">
    <text evidence="1">Belongs to the ATPase alpha/beta chains family.</text>
</comment>
<accession>A9IYX0</accession>
<proteinExistence type="inferred from homology"/>
<sequence>MDIRPSEISKILKEQIKNFDQKAEVSEIGWVLSVGDGIARVYGLDNVQAGEMVAFPNGVRGMALNLEVDNVGVVIFGSDRDIREGDCVKRLGAIVDVPVGPALLGRVVDALGNPIDGKGPLKETERRRVDVKAPGIIPRQSVHEPMSTGLKAIDALIPIGRGQRELVIGDRQTGKTAILLDTFLNQKPFHEKGAGREQDKVYCIYVAIGQKRSTVAQFVKVLEERGALEYSIIVAATASDPAPLQFIAPLAGCAMGEYFRDNGQHALIGYDDLSKQAVAYRQMSLLLRRPPGREAYPGDVFYLHSRLLERAAKLNAENGSGSLTALPVIETQANDVSAYIPTNVISITDGQIFLETNLFYQGIRPAVNVGLSVSRVGSAAQIKAMKQVAGSIKGELAQYREMAAFAQFGSDLDASTQRLLNRGARLTELLKQPQFSPLKTEEQVVVIFAGVNGYLDSLAVSDVARFEQGLLVLLRSDYQDLLQAIAEQKQITDELKDKLITVLNTYAKNFS</sequence>
<feature type="chain" id="PRO_1000086866" description="ATP synthase subunit alpha">
    <location>
        <begin position="1"/>
        <end position="511"/>
    </location>
</feature>
<feature type="binding site" evidence="1">
    <location>
        <begin position="169"/>
        <end position="176"/>
    </location>
    <ligand>
        <name>ATP</name>
        <dbReference type="ChEBI" id="CHEBI:30616"/>
    </ligand>
</feature>
<feature type="site" description="Required for activity" evidence="1">
    <location>
        <position position="372"/>
    </location>
</feature>
<reference key="1">
    <citation type="journal article" date="2007" name="Nat. Genet.">
        <title>Genomic analysis of Bartonella identifies type IV secretion systems as host adaptability factors.</title>
        <authorList>
            <person name="Saenz H.L."/>
            <person name="Engel P."/>
            <person name="Stoeckli M.C."/>
            <person name="Lanz C."/>
            <person name="Raddatz G."/>
            <person name="Vayssier-Taussat M."/>
            <person name="Birtles R."/>
            <person name="Schuster S.C."/>
            <person name="Dehio C."/>
        </authorList>
    </citation>
    <scope>NUCLEOTIDE SEQUENCE [LARGE SCALE GENOMIC DNA]</scope>
    <source>
        <strain>CIP 105476 / IBS 506</strain>
    </source>
</reference>
<gene>
    <name evidence="1" type="primary">atpA</name>
    <name type="ordered locus">BT_2466</name>
</gene>
<keyword id="KW-0066">ATP synthesis</keyword>
<keyword id="KW-0067">ATP-binding</keyword>
<keyword id="KW-0997">Cell inner membrane</keyword>
<keyword id="KW-1003">Cell membrane</keyword>
<keyword id="KW-0139">CF(1)</keyword>
<keyword id="KW-0375">Hydrogen ion transport</keyword>
<keyword id="KW-0406">Ion transport</keyword>
<keyword id="KW-0472">Membrane</keyword>
<keyword id="KW-0547">Nucleotide-binding</keyword>
<keyword id="KW-1278">Translocase</keyword>
<keyword id="KW-0813">Transport</keyword>